<accession>Q11182</accession>
<comment type="function">
    <text evidence="1 2 3 4 5">Plays a role in vesicle-mediated protein trafficking to lysosomal compartments including the endocytic membrane transport pathways (PubMed:26783301). Believed to act as a core component of the putative HOPS and CORVET endosomal tethering complexes which are proposed to be involved in the rab-5-to-rab-7 endosome conversion probably implicating sand-1, and via binding SNAREs and SNARE complexes to mediate tethering and docking events during SNARE-mediated membrane fusion (By similarity). The HOPS complex is proposed to be recruited to rab-7 on the late endosomal membrane and to regulate late endocytic, phagocytic and autophagic traffic towards lysosomes (By similarity). Within the HOPS complex, contributes to the normal development of gut granules in the adult intestine (PubMed:15843430, PubMed:24501423, PubMed:25273556). The CORVET complex is proposed to function as a rab-5 effector to mediate early endosome fusion probably in specific endosome subpopulations (By similarity). Required for recruitment of vps-33.1 to the HOPS complex (By similarity). Required for fusion of endosomes and autophagosomes with lysosomes; the function is dependent on its association with vps-33.1 but not vps-33.2 (By similarity).</text>
</comment>
<comment type="subunit">
    <text evidence="1">Probable core component of at least two putative endosomal tethering complexes, the homotypic fusion and vacuole protein sorting (HOPS) complex and the class C core vacuole/endosome tethering (CORVET) complex. Their common core is composed of the class C Vps proteins vps-11, vps-16 and vps-18, which in HOPS further associates with vps-33.1, vps-39 and vps-41 and in CORVET with vps-8 and vps-33.2.</text>
</comment>
<comment type="subcellular location">
    <subcellularLocation>
        <location evidence="1">Late endosome membrane</location>
        <topology evidence="1">Peripheral membrane protein</topology>
        <orientation evidence="1">Cytoplasmic side</orientation>
    </subcellularLocation>
    <subcellularLocation>
        <location evidence="1">Lysosome membrane</location>
        <topology evidence="1">Peripheral membrane protein</topology>
        <orientation evidence="1">Cytoplasmic side</orientation>
    </subcellularLocation>
    <text evidence="1">Cytoplasmic, peripheral membrane protein associated with late endosomes/lysosomes.</text>
</comment>
<comment type="disruption phenotype">
    <text evidence="2 3 4 5">Viable with a reduced number of gut granules in the adult intestine (PubMed:15843430, PubMed:24501423). Embryos of these adults arrest in early development and lack gut granules (PubMed:15843430). Endosome/lysosome fusion defects in coelomocytes (PubMed:26783301). RNAi-mediated knockdown results in a reduced number of gut granules in embryonic intestinal cells (PubMed:24501423). RNAi-mediated knockdown results in defective endosome maturation with the accumulation of small vesicles near the gut lumen and large endosomes/lysosomes on the basal side of the cell (PubMed:25273556).</text>
</comment>
<comment type="similarity">
    <text evidence="6">Belongs to the VPS16 family.</text>
</comment>
<proteinExistence type="inferred from homology"/>
<evidence type="ECO:0000250" key="1">
    <source>
        <dbReference type="UniProtKB" id="Q9H269"/>
    </source>
</evidence>
<evidence type="ECO:0000269" key="2">
    <source>
    </source>
</evidence>
<evidence type="ECO:0000269" key="3">
    <source>
    </source>
</evidence>
<evidence type="ECO:0000269" key="4">
    <source>
    </source>
</evidence>
<evidence type="ECO:0000269" key="5">
    <source>
    </source>
</evidence>
<evidence type="ECO:0000305" key="6"/>
<evidence type="ECO:0000312" key="7">
    <source>
        <dbReference type="WormBase" id="C05D11.2"/>
    </source>
</evidence>
<sequence length="852" mass="95843">MGESHAPSKPKLDGELCLRPSSSVFLGDQQLYFTQEYLRTNSLNLKYVVYFTACQFSGPIAVAYSPRPASWYIWIRTISGRILKRDMAFNEPVFMEWTRAHCLLVLNKAGRAHIFSSLGEKISEVIFDSQMSDVHECRTFATSRGDSGIAVMDVDGQVSVVNSVSEPVIWSMKPPYSEMPTAWTAFQPHSQLTHILLIFEAVFLMGCQGESLREQSHAASWVDSNTKYVKCVVDDARSRIAMMTESGKIQIVSIDLSTCFCTVEITDHDIAKCINFGWVGNSAVFVQMSPSLIVFVNVSARRKPGDEVQIYEKMTANAKISIEPDGIRLFESTQVEFVEAASREKIAVLNRNPNEDGAHLYKAAQEMSQGTGHNSFAASTVIQDLYKAIDDCISTACDTWQPEEQKLLLKAARFGMAYTNTTPDTTKLMRAIKEIRVLNELRMVRTGIPLTHRQFRAIGETCVINRLIDMGSYSVAIKVAQWLGGETSENVDRVLLEWVRRSISKVSKSNMKMDQPALEALDEKISAKLLQFPHVSIADAARRAIEAKLPELARLFIRRETDDANHVAVLLQLNDVSAALQKASASQRPQLIHQVVRHLMNSESRSSYELAISRIPLAQCLYQDLVRQEGETRGASSRQMLALLEQASDFERQTLFHFDVAETERNPDERLNALRRAKDAAKSMGDKAIEEILNDVSAFAPLQIQRGQADMSVRDTVIEMAHDTAKVAQLKQQARLTDKQVLLWTIEGLAKKGKMEQLFDLAQKRSPIGYAPFVKACVRYKRLDEIKKYFAKVNGYPDLVAAHLAMKNYVEAAKLAYDRRDRDVLHAVHMKSHEDPTQCPRVGQFLRSLDQN</sequence>
<name>VPS16_CAEEL</name>
<gene>
    <name evidence="7" type="primary">vps-16</name>
    <name evidence="7" type="ORF">C05D11.2</name>
</gene>
<feature type="chain" id="PRO_0000065147" description="Vacuolar protein sorting-associated protein 16 homolog">
    <location>
        <begin position="1"/>
        <end position="852"/>
    </location>
</feature>
<keyword id="KW-0967">Endosome</keyword>
<keyword id="KW-0458">Lysosome</keyword>
<keyword id="KW-0472">Membrane</keyword>
<keyword id="KW-0653">Protein transport</keyword>
<keyword id="KW-1185">Reference proteome</keyword>
<keyword id="KW-0813">Transport</keyword>
<organism>
    <name type="scientific">Caenorhabditis elegans</name>
    <dbReference type="NCBI Taxonomy" id="6239"/>
    <lineage>
        <taxon>Eukaryota</taxon>
        <taxon>Metazoa</taxon>
        <taxon>Ecdysozoa</taxon>
        <taxon>Nematoda</taxon>
        <taxon>Chromadorea</taxon>
        <taxon>Rhabditida</taxon>
        <taxon>Rhabditina</taxon>
        <taxon>Rhabditomorpha</taxon>
        <taxon>Rhabditoidea</taxon>
        <taxon>Rhabditidae</taxon>
        <taxon>Peloderinae</taxon>
        <taxon>Caenorhabditis</taxon>
    </lineage>
</organism>
<protein>
    <recommendedName>
        <fullName>Vacuolar protein sorting-associated protein 16 homolog</fullName>
    </recommendedName>
</protein>
<reference key="1">
    <citation type="journal article" date="1998" name="Science">
        <title>Genome sequence of the nematode C. elegans: a platform for investigating biology.</title>
        <authorList>
            <consortium name="The C. elegans sequencing consortium"/>
        </authorList>
    </citation>
    <scope>NUCLEOTIDE SEQUENCE [LARGE SCALE GENOMIC DNA]</scope>
    <source>
        <strain>Bristol N2</strain>
    </source>
</reference>
<reference key="2">
    <citation type="journal article" date="2005" name="Mol. Biol. Cell">
        <title>Genetic analysis of lysosomal trafficking in Caenorhabditis elegans.</title>
        <authorList>
            <person name="Hermann G.J."/>
            <person name="Schroeder L.K."/>
            <person name="Hieb C.A."/>
            <person name="Kershner A.M."/>
            <person name="Rabbitts B.M."/>
            <person name="Fonarev P."/>
            <person name="Grant B.D."/>
            <person name="Priess J.R."/>
        </authorList>
    </citation>
    <scope>FUNCTION</scope>
    <scope>DISRUPTION PHENOTYPE</scope>
</reference>
<reference key="3">
    <citation type="journal article" date="2014" name="Mol. Biol. Cell">
        <title>Caenorhabditis elegans HOPS and CCZ-1 mediate trafficking to lysosome-related organelles independently of RAB-7 and SAND-1.</title>
        <authorList>
            <person name="Delahaye J.L."/>
            <person name="Foster O.K."/>
            <person name="Vine A."/>
            <person name="Saxton D.S."/>
            <person name="Curtin T.P."/>
            <person name="Somhegyi H."/>
            <person name="Salesky R."/>
            <person name="Hermann G.J."/>
        </authorList>
    </citation>
    <scope>FUNCTION</scope>
    <scope>DISRUPTION PHENOTYPE</scope>
</reference>
<reference key="4">
    <citation type="journal article" date="2014" name="Mol. Biol. Cell">
        <title>Loss of the Sec1/Munc18-family proteins VPS-33.2 and VPS-33.1 bypasses a block in endosome maturation in Caenorhabditis elegans.</title>
        <authorList>
            <person name="Solinger J.A."/>
            <person name="Spang A."/>
        </authorList>
    </citation>
    <scope>FUNCTION</scope>
    <scope>DISRUPTION PHENOTYPE</scope>
</reference>
<reference key="5">
    <citation type="journal article" date="2016" name="J. Cell Biol.">
        <title>Negative regulation of phosphatidylinositol 3-phosphate levels in early-to-late endosome conversion.</title>
        <authorList>
            <person name="Liu K."/>
            <person name="Jian Y."/>
            <person name="Sun X."/>
            <person name="Yang C."/>
            <person name="Gao Z."/>
            <person name="Zhang Z."/>
            <person name="Liu X."/>
            <person name="Li Y."/>
            <person name="Xu J."/>
            <person name="Jing Y."/>
            <person name="Mitani S."/>
            <person name="He S."/>
            <person name="Yang C."/>
        </authorList>
    </citation>
    <scope>FUNCTION</scope>
    <scope>DISRUPTION PHENOTYPE</scope>
</reference>
<reference key="6">
    <citation type="journal article" date="2016" name="J. Cell Biol.">
        <title>Correction: Negative regulation of phosphatidylinositol 3-phosphate levels in early-to-late endosome conversion.</title>
        <authorList>
            <person name="Liu K."/>
            <person name="Jian Y."/>
            <person name="Sun X."/>
            <person name="Yang C."/>
            <person name="Gao Z."/>
            <person name="Zhang Z."/>
            <person name="Liu X."/>
            <person name="Li Y."/>
            <person name="Xu J."/>
            <person name="Jing Y."/>
            <person name="Mitani S."/>
            <person name="He S."/>
            <person name="Yang C."/>
        </authorList>
    </citation>
    <scope>ERRATUM OF PUBMED:26783301</scope>
</reference>
<dbReference type="EMBL" id="FO080365">
    <property type="protein sequence ID" value="CCD63191.1"/>
    <property type="molecule type" value="Genomic_DNA"/>
</dbReference>
<dbReference type="PIR" id="H88482">
    <property type="entry name" value="H88482"/>
</dbReference>
<dbReference type="RefSeq" id="NP_498411.1">
    <property type="nucleotide sequence ID" value="NM_066010.6"/>
</dbReference>
<dbReference type="SMR" id="Q11182"/>
<dbReference type="BioGRID" id="41131">
    <property type="interactions" value="4"/>
</dbReference>
<dbReference type="ComplexPortal" id="CPX-1136">
    <property type="entry name" value="HOPS tethering complex"/>
</dbReference>
<dbReference type="ComplexPortal" id="CPX-1137">
    <property type="entry name" value="CORVET tethering complex"/>
</dbReference>
<dbReference type="FunCoup" id="Q11182">
    <property type="interactions" value="3359"/>
</dbReference>
<dbReference type="STRING" id="6239.C05D11.2.1"/>
<dbReference type="PaxDb" id="6239-C05D11.2"/>
<dbReference type="PeptideAtlas" id="Q11182"/>
<dbReference type="EnsemblMetazoa" id="C05D11.2.1">
    <property type="protein sequence ID" value="C05D11.2.1"/>
    <property type="gene ID" value="WBGene00006516"/>
</dbReference>
<dbReference type="GeneID" id="175913"/>
<dbReference type="KEGG" id="cel:CELE_C05D11.2"/>
<dbReference type="UCSC" id="C05D11.2.1">
    <property type="organism name" value="c. elegans"/>
</dbReference>
<dbReference type="AGR" id="WB:WBGene00006516"/>
<dbReference type="CTD" id="175913"/>
<dbReference type="WormBase" id="C05D11.2">
    <property type="protein sequence ID" value="CE24785"/>
    <property type="gene ID" value="WBGene00006516"/>
    <property type="gene designation" value="vps-16"/>
</dbReference>
<dbReference type="eggNOG" id="KOG2280">
    <property type="taxonomic scope" value="Eukaryota"/>
</dbReference>
<dbReference type="GeneTree" id="ENSGT00390000003896"/>
<dbReference type="HOGENOM" id="CLU_335015_0_0_1"/>
<dbReference type="InParanoid" id="Q11182"/>
<dbReference type="OMA" id="RIPACLC"/>
<dbReference type="OrthoDB" id="1792at2759"/>
<dbReference type="PhylomeDB" id="Q11182"/>
<dbReference type="PRO" id="PR:Q11182"/>
<dbReference type="Proteomes" id="UP000001940">
    <property type="component" value="Chromosome III"/>
</dbReference>
<dbReference type="Bgee" id="WBGene00006516">
    <property type="expression patterns" value="Expressed in germ line (C elegans) and 4 other cell types or tissues"/>
</dbReference>
<dbReference type="GO" id="GO:0033263">
    <property type="term" value="C:CORVET complex"/>
    <property type="evidence" value="ECO:0000303"/>
    <property type="project" value="ComplexPortal"/>
</dbReference>
<dbReference type="GO" id="GO:0031901">
    <property type="term" value="C:early endosome membrane"/>
    <property type="evidence" value="ECO:0000303"/>
    <property type="project" value="ComplexPortal"/>
</dbReference>
<dbReference type="GO" id="GO:0005768">
    <property type="term" value="C:endosome"/>
    <property type="evidence" value="ECO:0000318"/>
    <property type="project" value="GO_Central"/>
</dbReference>
<dbReference type="GO" id="GO:0030897">
    <property type="term" value="C:HOPS complex"/>
    <property type="evidence" value="ECO:0000250"/>
    <property type="project" value="WormBase"/>
</dbReference>
<dbReference type="GO" id="GO:0031902">
    <property type="term" value="C:late endosome membrane"/>
    <property type="evidence" value="ECO:0007669"/>
    <property type="project" value="UniProtKB-SubCell"/>
</dbReference>
<dbReference type="GO" id="GO:0005765">
    <property type="term" value="C:lysosomal membrane"/>
    <property type="evidence" value="ECO:0000303"/>
    <property type="project" value="UniProtKB"/>
</dbReference>
<dbReference type="GO" id="GO:0003779">
    <property type="term" value="F:actin binding"/>
    <property type="evidence" value="ECO:0000318"/>
    <property type="project" value="GO_Central"/>
</dbReference>
<dbReference type="GO" id="GO:0048565">
    <property type="term" value="P:digestive tract development"/>
    <property type="evidence" value="ECO:0000315"/>
    <property type="project" value="UniProtKB"/>
</dbReference>
<dbReference type="GO" id="GO:0009792">
    <property type="term" value="P:embryo development ending in birth or egg hatching"/>
    <property type="evidence" value="ECO:0000315"/>
    <property type="project" value="UniProtKB"/>
</dbReference>
<dbReference type="GO" id="GO:0016197">
    <property type="term" value="P:endosomal transport"/>
    <property type="evidence" value="ECO:0000318"/>
    <property type="project" value="GO_Central"/>
</dbReference>
<dbReference type="GO" id="GO:0006886">
    <property type="term" value="P:intracellular protein transport"/>
    <property type="evidence" value="ECO:0000303"/>
    <property type="project" value="UniProtKB"/>
</dbReference>
<dbReference type="GO" id="GO:0032889">
    <property type="term" value="P:regulation of vacuole fusion, non-autophagic"/>
    <property type="evidence" value="ECO:0000303"/>
    <property type="project" value="ComplexPortal"/>
</dbReference>
<dbReference type="GO" id="GO:0042144">
    <property type="term" value="P:vacuole fusion, non-autophagic"/>
    <property type="evidence" value="ECO:0000318"/>
    <property type="project" value="GO_Central"/>
</dbReference>
<dbReference type="GO" id="GO:0099022">
    <property type="term" value="P:vesicle tethering"/>
    <property type="evidence" value="ECO:0000303"/>
    <property type="project" value="ComplexPortal"/>
</dbReference>
<dbReference type="InterPro" id="IPR016534">
    <property type="entry name" value="VPS16"/>
</dbReference>
<dbReference type="InterPro" id="IPR006925">
    <property type="entry name" value="Vps16_C"/>
</dbReference>
<dbReference type="InterPro" id="IPR006926">
    <property type="entry name" value="Vps16_N"/>
</dbReference>
<dbReference type="PANTHER" id="PTHR12811">
    <property type="entry name" value="VACUOLAR PROTEIN SORTING VPS16"/>
    <property type="match status" value="1"/>
</dbReference>
<dbReference type="PANTHER" id="PTHR12811:SF0">
    <property type="entry name" value="VACUOLAR PROTEIN SORTING-ASSOCIATED PROTEIN 16 HOMOLOG"/>
    <property type="match status" value="1"/>
</dbReference>
<dbReference type="Pfam" id="PF04840">
    <property type="entry name" value="Vps16_C"/>
    <property type="match status" value="1"/>
</dbReference>
<dbReference type="Pfam" id="PF04841">
    <property type="entry name" value="Vps16_N"/>
    <property type="match status" value="1"/>
</dbReference>
<dbReference type="PIRSF" id="PIRSF007949">
    <property type="entry name" value="VPS16"/>
    <property type="match status" value="1"/>
</dbReference>